<organism>
    <name type="scientific">Alkaliphilus oremlandii (strain OhILAs)</name>
    <name type="common">Clostridium oremlandii (strain OhILAs)</name>
    <dbReference type="NCBI Taxonomy" id="350688"/>
    <lineage>
        <taxon>Bacteria</taxon>
        <taxon>Bacillati</taxon>
        <taxon>Bacillota</taxon>
        <taxon>Clostridia</taxon>
        <taxon>Peptostreptococcales</taxon>
        <taxon>Natronincolaceae</taxon>
        <taxon>Alkaliphilus</taxon>
    </lineage>
</organism>
<proteinExistence type="inferred from homology"/>
<reference key="1">
    <citation type="submission" date="2007-10" db="EMBL/GenBank/DDBJ databases">
        <title>Complete genome of Alkaliphilus oremlandii OhILAs.</title>
        <authorList>
            <person name="Copeland A."/>
            <person name="Lucas S."/>
            <person name="Lapidus A."/>
            <person name="Barry K."/>
            <person name="Detter J.C."/>
            <person name="Glavina del Rio T."/>
            <person name="Hammon N."/>
            <person name="Israni S."/>
            <person name="Dalin E."/>
            <person name="Tice H."/>
            <person name="Pitluck S."/>
            <person name="Chain P."/>
            <person name="Malfatti S."/>
            <person name="Shin M."/>
            <person name="Vergez L."/>
            <person name="Schmutz J."/>
            <person name="Larimer F."/>
            <person name="Land M."/>
            <person name="Hauser L."/>
            <person name="Kyrpides N."/>
            <person name="Mikhailova N."/>
            <person name="Stolz J.F."/>
            <person name="Dawson A."/>
            <person name="Fisher E."/>
            <person name="Crable B."/>
            <person name="Perera E."/>
            <person name="Lisak J."/>
            <person name="Ranganathan M."/>
            <person name="Basu P."/>
            <person name="Richardson P."/>
        </authorList>
    </citation>
    <scope>NUCLEOTIDE SEQUENCE [LARGE SCALE GENOMIC DNA]</scope>
    <source>
        <strain>OhILAs</strain>
    </source>
</reference>
<protein>
    <recommendedName>
        <fullName evidence="1">Large ribosomal subunit protein uL18</fullName>
    </recommendedName>
    <alternativeName>
        <fullName evidence="3">50S ribosomal protein L18</fullName>
    </alternativeName>
</protein>
<gene>
    <name evidence="1" type="primary">rplR</name>
    <name type="ordered locus">Clos_0508</name>
</gene>
<feature type="chain" id="PRO_1000067636" description="Large ribosomal subunit protein uL18">
    <location>
        <begin position="1"/>
        <end position="122"/>
    </location>
</feature>
<feature type="region of interest" description="Disordered" evidence="2">
    <location>
        <begin position="1"/>
        <end position="20"/>
    </location>
</feature>
<accession>A8MLF6</accession>
<sequence>MFKKVSKNANRLSRHQRVRNKITGTPERPRLNVYRSLTNIYVQLIDDVAGKTLVAASSLDKEIKDQVSATGNAEAAKLVGQLVGKRALEKGIDTVTFDRGGNIYHGRIQALAEGAREAGLKF</sequence>
<dbReference type="EMBL" id="CP000853">
    <property type="protein sequence ID" value="ABW18070.1"/>
    <property type="molecule type" value="Genomic_DNA"/>
</dbReference>
<dbReference type="RefSeq" id="WP_012158384.1">
    <property type="nucleotide sequence ID" value="NC_009922.1"/>
</dbReference>
<dbReference type="SMR" id="A8MLF6"/>
<dbReference type="STRING" id="350688.Clos_0508"/>
<dbReference type="KEGG" id="aoe:Clos_0508"/>
<dbReference type="eggNOG" id="COG0256">
    <property type="taxonomic scope" value="Bacteria"/>
</dbReference>
<dbReference type="HOGENOM" id="CLU_098841_0_1_9"/>
<dbReference type="OrthoDB" id="9810939at2"/>
<dbReference type="Proteomes" id="UP000000269">
    <property type="component" value="Chromosome"/>
</dbReference>
<dbReference type="GO" id="GO:0022625">
    <property type="term" value="C:cytosolic large ribosomal subunit"/>
    <property type="evidence" value="ECO:0007669"/>
    <property type="project" value="TreeGrafter"/>
</dbReference>
<dbReference type="GO" id="GO:0008097">
    <property type="term" value="F:5S rRNA binding"/>
    <property type="evidence" value="ECO:0007669"/>
    <property type="project" value="TreeGrafter"/>
</dbReference>
<dbReference type="GO" id="GO:0003735">
    <property type="term" value="F:structural constituent of ribosome"/>
    <property type="evidence" value="ECO:0007669"/>
    <property type="project" value="InterPro"/>
</dbReference>
<dbReference type="GO" id="GO:0006412">
    <property type="term" value="P:translation"/>
    <property type="evidence" value="ECO:0007669"/>
    <property type="project" value="UniProtKB-UniRule"/>
</dbReference>
<dbReference type="CDD" id="cd00432">
    <property type="entry name" value="Ribosomal_L18_L5e"/>
    <property type="match status" value="1"/>
</dbReference>
<dbReference type="FunFam" id="3.30.420.100:FF:000001">
    <property type="entry name" value="50S ribosomal protein L18"/>
    <property type="match status" value="1"/>
</dbReference>
<dbReference type="Gene3D" id="3.30.420.100">
    <property type="match status" value="1"/>
</dbReference>
<dbReference type="HAMAP" id="MF_01337_B">
    <property type="entry name" value="Ribosomal_uL18_B"/>
    <property type="match status" value="1"/>
</dbReference>
<dbReference type="InterPro" id="IPR004389">
    <property type="entry name" value="Ribosomal_uL18_bac-type"/>
</dbReference>
<dbReference type="InterPro" id="IPR005484">
    <property type="entry name" value="Ribosomal_uL18_bac/euk"/>
</dbReference>
<dbReference type="NCBIfam" id="TIGR00060">
    <property type="entry name" value="L18_bact"/>
    <property type="match status" value="1"/>
</dbReference>
<dbReference type="PANTHER" id="PTHR12899">
    <property type="entry name" value="39S RIBOSOMAL PROTEIN L18, MITOCHONDRIAL"/>
    <property type="match status" value="1"/>
</dbReference>
<dbReference type="PANTHER" id="PTHR12899:SF3">
    <property type="entry name" value="LARGE RIBOSOMAL SUBUNIT PROTEIN UL18M"/>
    <property type="match status" value="1"/>
</dbReference>
<dbReference type="Pfam" id="PF00861">
    <property type="entry name" value="Ribosomal_L18p"/>
    <property type="match status" value="1"/>
</dbReference>
<dbReference type="SUPFAM" id="SSF53137">
    <property type="entry name" value="Translational machinery components"/>
    <property type="match status" value="1"/>
</dbReference>
<name>RL18_ALKOO</name>
<keyword id="KW-1185">Reference proteome</keyword>
<keyword id="KW-0687">Ribonucleoprotein</keyword>
<keyword id="KW-0689">Ribosomal protein</keyword>
<keyword id="KW-0694">RNA-binding</keyword>
<keyword id="KW-0699">rRNA-binding</keyword>
<comment type="function">
    <text evidence="1">This is one of the proteins that bind and probably mediate the attachment of the 5S RNA into the large ribosomal subunit, where it forms part of the central protuberance.</text>
</comment>
<comment type="subunit">
    <text evidence="1">Part of the 50S ribosomal subunit; part of the 5S rRNA/L5/L18/L25 subcomplex. Contacts the 5S and 23S rRNAs.</text>
</comment>
<comment type="similarity">
    <text evidence="1">Belongs to the universal ribosomal protein uL18 family.</text>
</comment>
<evidence type="ECO:0000255" key="1">
    <source>
        <dbReference type="HAMAP-Rule" id="MF_01337"/>
    </source>
</evidence>
<evidence type="ECO:0000256" key="2">
    <source>
        <dbReference type="SAM" id="MobiDB-lite"/>
    </source>
</evidence>
<evidence type="ECO:0000305" key="3"/>